<gene>
    <name evidence="1" type="primary">coaD</name>
    <name type="ordered locus">Bcep1808_2912</name>
</gene>
<keyword id="KW-0067">ATP-binding</keyword>
<keyword id="KW-0173">Coenzyme A biosynthesis</keyword>
<keyword id="KW-0963">Cytoplasm</keyword>
<keyword id="KW-0460">Magnesium</keyword>
<keyword id="KW-0547">Nucleotide-binding</keyword>
<keyword id="KW-0548">Nucleotidyltransferase</keyword>
<keyword id="KW-0808">Transferase</keyword>
<organism>
    <name type="scientific">Burkholderia vietnamiensis (strain G4 / LMG 22486)</name>
    <name type="common">Burkholderia cepacia (strain R1808)</name>
    <dbReference type="NCBI Taxonomy" id="269482"/>
    <lineage>
        <taxon>Bacteria</taxon>
        <taxon>Pseudomonadati</taxon>
        <taxon>Pseudomonadota</taxon>
        <taxon>Betaproteobacteria</taxon>
        <taxon>Burkholderiales</taxon>
        <taxon>Burkholderiaceae</taxon>
        <taxon>Burkholderia</taxon>
        <taxon>Burkholderia cepacia complex</taxon>
    </lineage>
</organism>
<feature type="chain" id="PRO_1000011114" description="Phosphopantetheine adenylyltransferase">
    <location>
        <begin position="1"/>
        <end position="165"/>
    </location>
</feature>
<feature type="binding site" evidence="1">
    <location>
        <begin position="9"/>
        <end position="10"/>
    </location>
    <ligand>
        <name>ATP</name>
        <dbReference type="ChEBI" id="CHEBI:30616"/>
    </ligand>
</feature>
<feature type="binding site" evidence="1">
    <location>
        <position position="9"/>
    </location>
    <ligand>
        <name>substrate</name>
    </ligand>
</feature>
<feature type="binding site" evidence="1">
    <location>
        <position position="17"/>
    </location>
    <ligand>
        <name>ATP</name>
        <dbReference type="ChEBI" id="CHEBI:30616"/>
    </ligand>
</feature>
<feature type="binding site" evidence="1">
    <location>
        <position position="41"/>
    </location>
    <ligand>
        <name>substrate</name>
    </ligand>
</feature>
<feature type="binding site" evidence="1">
    <location>
        <position position="73"/>
    </location>
    <ligand>
        <name>substrate</name>
    </ligand>
</feature>
<feature type="binding site" evidence="1">
    <location>
        <position position="87"/>
    </location>
    <ligand>
        <name>substrate</name>
    </ligand>
</feature>
<feature type="binding site" evidence="1">
    <location>
        <begin position="88"/>
        <end position="90"/>
    </location>
    <ligand>
        <name>ATP</name>
        <dbReference type="ChEBI" id="CHEBI:30616"/>
    </ligand>
</feature>
<feature type="binding site" evidence="1">
    <location>
        <position position="98"/>
    </location>
    <ligand>
        <name>ATP</name>
        <dbReference type="ChEBI" id="CHEBI:30616"/>
    </ligand>
</feature>
<feature type="binding site" evidence="1">
    <location>
        <begin position="123"/>
        <end position="129"/>
    </location>
    <ligand>
        <name>ATP</name>
        <dbReference type="ChEBI" id="CHEBI:30616"/>
    </ligand>
</feature>
<feature type="site" description="Transition state stabilizer" evidence="1">
    <location>
        <position position="17"/>
    </location>
</feature>
<protein>
    <recommendedName>
        <fullName evidence="1">Phosphopantetheine adenylyltransferase</fullName>
        <ecNumber evidence="1">2.7.7.3</ecNumber>
    </recommendedName>
    <alternativeName>
        <fullName evidence="1">Dephospho-CoA pyrophosphorylase</fullName>
    </alternativeName>
    <alternativeName>
        <fullName evidence="1">Pantetheine-phosphate adenylyltransferase</fullName>
        <shortName evidence="1">PPAT</shortName>
    </alternativeName>
</protein>
<dbReference type="EC" id="2.7.7.3" evidence="1"/>
<dbReference type="EMBL" id="CP000614">
    <property type="protein sequence ID" value="ABO55903.1"/>
    <property type="molecule type" value="Genomic_DNA"/>
</dbReference>
<dbReference type="SMR" id="A4JI00"/>
<dbReference type="KEGG" id="bvi:Bcep1808_2912"/>
<dbReference type="eggNOG" id="COG0669">
    <property type="taxonomic scope" value="Bacteria"/>
</dbReference>
<dbReference type="HOGENOM" id="CLU_100149_0_1_4"/>
<dbReference type="UniPathway" id="UPA00241">
    <property type="reaction ID" value="UER00355"/>
</dbReference>
<dbReference type="Proteomes" id="UP000002287">
    <property type="component" value="Chromosome 1"/>
</dbReference>
<dbReference type="GO" id="GO:0005737">
    <property type="term" value="C:cytoplasm"/>
    <property type="evidence" value="ECO:0007669"/>
    <property type="project" value="UniProtKB-SubCell"/>
</dbReference>
<dbReference type="GO" id="GO:0005524">
    <property type="term" value="F:ATP binding"/>
    <property type="evidence" value="ECO:0007669"/>
    <property type="project" value="UniProtKB-KW"/>
</dbReference>
<dbReference type="GO" id="GO:0004595">
    <property type="term" value="F:pantetheine-phosphate adenylyltransferase activity"/>
    <property type="evidence" value="ECO:0007669"/>
    <property type="project" value="UniProtKB-UniRule"/>
</dbReference>
<dbReference type="GO" id="GO:0015937">
    <property type="term" value="P:coenzyme A biosynthetic process"/>
    <property type="evidence" value="ECO:0007669"/>
    <property type="project" value="UniProtKB-UniRule"/>
</dbReference>
<dbReference type="CDD" id="cd02163">
    <property type="entry name" value="PPAT"/>
    <property type="match status" value="1"/>
</dbReference>
<dbReference type="Gene3D" id="3.40.50.620">
    <property type="entry name" value="HUPs"/>
    <property type="match status" value="1"/>
</dbReference>
<dbReference type="HAMAP" id="MF_00151">
    <property type="entry name" value="PPAT_bact"/>
    <property type="match status" value="1"/>
</dbReference>
<dbReference type="InterPro" id="IPR004821">
    <property type="entry name" value="Cyt_trans-like"/>
</dbReference>
<dbReference type="InterPro" id="IPR001980">
    <property type="entry name" value="PPAT"/>
</dbReference>
<dbReference type="InterPro" id="IPR014729">
    <property type="entry name" value="Rossmann-like_a/b/a_fold"/>
</dbReference>
<dbReference type="NCBIfam" id="TIGR01510">
    <property type="entry name" value="coaD_prev_kdtB"/>
    <property type="match status" value="1"/>
</dbReference>
<dbReference type="NCBIfam" id="TIGR00125">
    <property type="entry name" value="cyt_tran_rel"/>
    <property type="match status" value="1"/>
</dbReference>
<dbReference type="PANTHER" id="PTHR21342">
    <property type="entry name" value="PHOSPHOPANTETHEINE ADENYLYLTRANSFERASE"/>
    <property type="match status" value="1"/>
</dbReference>
<dbReference type="PANTHER" id="PTHR21342:SF1">
    <property type="entry name" value="PHOSPHOPANTETHEINE ADENYLYLTRANSFERASE"/>
    <property type="match status" value="1"/>
</dbReference>
<dbReference type="Pfam" id="PF01467">
    <property type="entry name" value="CTP_transf_like"/>
    <property type="match status" value="1"/>
</dbReference>
<dbReference type="PRINTS" id="PR01020">
    <property type="entry name" value="LPSBIOSNTHSS"/>
</dbReference>
<dbReference type="SUPFAM" id="SSF52374">
    <property type="entry name" value="Nucleotidylyl transferase"/>
    <property type="match status" value="1"/>
</dbReference>
<name>COAD_BURVG</name>
<proteinExistence type="inferred from homology"/>
<evidence type="ECO:0000255" key="1">
    <source>
        <dbReference type="HAMAP-Rule" id="MF_00151"/>
    </source>
</evidence>
<comment type="function">
    <text evidence="1">Reversibly transfers an adenylyl group from ATP to 4'-phosphopantetheine, yielding dephospho-CoA (dPCoA) and pyrophosphate.</text>
</comment>
<comment type="catalytic activity">
    <reaction evidence="1">
        <text>(R)-4'-phosphopantetheine + ATP + H(+) = 3'-dephospho-CoA + diphosphate</text>
        <dbReference type="Rhea" id="RHEA:19801"/>
        <dbReference type="ChEBI" id="CHEBI:15378"/>
        <dbReference type="ChEBI" id="CHEBI:30616"/>
        <dbReference type="ChEBI" id="CHEBI:33019"/>
        <dbReference type="ChEBI" id="CHEBI:57328"/>
        <dbReference type="ChEBI" id="CHEBI:61723"/>
        <dbReference type="EC" id="2.7.7.3"/>
    </reaction>
</comment>
<comment type="cofactor">
    <cofactor evidence="1">
        <name>Mg(2+)</name>
        <dbReference type="ChEBI" id="CHEBI:18420"/>
    </cofactor>
</comment>
<comment type="pathway">
    <text evidence="1">Cofactor biosynthesis; coenzyme A biosynthesis; CoA from (R)-pantothenate: step 4/5.</text>
</comment>
<comment type="subunit">
    <text evidence="1">Homohexamer.</text>
</comment>
<comment type="subcellular location">
    <subcellularLocation>
        <location evidence="1">Cytoplasm</location>
    </subcellularLocation>
</comment>
<comment type="similarity">
    <text evidence="1">Belongs to the bacterial CoaD family.</text>
</comment>
<accession>A4JI00</accession>
<sequence length="165" mass="18428">MVVAVYPGTFDPLTRGHEDLVRRASSIFDTLVVGVADSRAKKPFFSLEERLKIANEVLGHYPNVKVMGFKGLLKDFVRTNNARVIVRGLRAVSDFEYEFQMAGMNRYLLPDVETMFMTPSDQYQFISGTIVREIAQLGGDVSKFVFPSVEKWLTEKVAAMGGPAA</sequence>
<reference key="1">
    <citation type="submission" date="2007-03" db="EMBL/GenBank/DDBJ databases">
        <title>Complete sequence of chromosome 1 of Burkholderia vietnamiensis G4.</title>
        <authorList>
            <consortium name="US DOE Joint Genome Institute"/>
            <person name="Copeland A."/>
            <person name="Lucas S."/>
            <person name="Lapidus A."/>
            <person name="Barry K."/>
            <person name="Detter J.C."/>
            <person name="Glavina del Rio T."/>
            <person name="Hammon N."/>
            <person name="Israni S."/>
            <person name="Dalin E."/>
            <person name="Tice H."/>
            <person name="Pitluck S."/>
            <person name="Chain P."/>
            <person name="Malfatti S."/>
            <person name="Shin M."/>
            <person name="Vergez L."/>
            <person name="Schmutz J."/>
            <person name="Larimer F."/>
            <person name="Land M."/>
            <person name="Hauser L."/>
            <person name="Kyrpides N."/>
            <person name="Tiedje J."/>
            <person name="Richardson P."/>
        </authorList>
    </citation>
    <scope>NUCLEOTIDE SEQUENCE [LARGE SCALE GENOMIC DNA]</scope>
    <source>
        <strain>G4 / LMG 22486</strain>
    </source>
</reference>